<protein>
    <recommendedName>
        <fullName>Uncharacterized ATP-binding protein MJ0075</fullName>
    </recommendedName>
</protein>
<evidence type="ECO:0000255" key="1"/>
<evidence type="ECO:0000305" key="2"/>
<proteinExistence type="inferred from homology"/>
<feature type="chain" id="PRO_0000184666" description="Uncharacterized ATP-binding protein MJ0075">
    <location>
        <begin position="1"/>
        <end position="365"/>
    </location>
</feature>
<feature type="binding site" evidence="1">
    <location>
        <begin position="31"/>
        <end position="38"/>
    </location>
    <ligand>
        <name>ATP</name>
        <dbReference type="ChEBI" id="CHEBI:30616"/>
    </ligand>
</feature>
<organism>
    <name type="scientific">Methanocaldococcus jannaschii (strain ATCC 43067 / DSM 2661 / JAL-1 / JCM 10045 / NBRC 100440)</name>
    <name type="common">Methanococcus jannaschii</name>
    <dbReference type="NCBI Taxonomy" id="243232"/>
    <lineage>
        <taxon>Archaea</taxon>
        <taxon>Methanobacteriati</taxon>
        <taxon>Methanobacteriota</taxon>
        <taxon>Methanomada group</taxon>
        <taxon>Methanococci</taxon>
        <taxon>Methanococcales</taxon>
        <taxon>Methanocaldococcaceae</taxon>
        <taxon>Methanocaldococcus</taxon>
    </lineage>
</organism>
<keyword id="KW-0067">ATP-binding</keyword>
<keyword id="KW-0547">Nucleotide-binding</keyword>
<keyword id="KW-1185">Reference proteome</keyword>
<gene>
    <name type="ordered locus">MJ0075</name>
</gene>
<name>Y075_METJA</name>
<reference key="1">
    <citation type="journal article" date="1996" name="Science">
        <title>Complete genome sequence of the methanogenic archaeon, Methanococcus jannaschii.</title>
        <authorList>
            <person name="Bult C.J."/>
            <person name="White O."/>
            <person name="Olsen G.J."/>
            <person name="Zhou L."/>
            <person name="Fleischmann R.D."/>
            <person name="Sutton G.G."/>
            <person name="Blake J.A."/>
            <person name="FitzGerald L.M."/>
            <person name="Clayton R.A."/>
            <person name="Gocayne J.D."/>
            <person name="Kerlavage A.R."/>
            <person name="Dougherty B.A."/>
            <person name="Tomb J.-F."/>
            <person name="Adams M.D."/>
            <person name="Reich C.I."/>
            <person name="Overbeek R."/>
            <person name="Kirkness E.F."/>
            <person name="Weinstock K.G."/>
            <person name="Merrick J.M."/>
            <person name="Glodek A."/>
            <person name="Scott J.L."/>
            <person name="Geoghagen N.S.M."/>
            <person name="Weidman J.F."/>
            <person name="Fuhrmann J.L."/>
            <person name="Nguyen D."/>
            <person name="Utterback T.R."/>
            <person name="Kelley J.M."/>
            <person name="Peterson J.D."/>
            <person name="Sadow P.W."/>
            <person name="Hanna M.C."/>
            <person name="Cotton M.D."/>
            <person name="Roberts K.M."/>
            <person name="Hurst M.A."/>
            <person name="Kaine B.P."/>
            <person name="Borodovsky M."/>
            <person name="Klenk H.-P."/>
            <person name="Fraser C.M."/>
            <person name="Smith H.O."/>
            <person name="Woese C.R."/>
            <person name="Venter J.C."/>
        </authorList>
    </citation>
    <scope>NUCLEOTIDE SEQUENCE [LARGE SCALE GENOMIC DNA]</scope>
    <source>
        <strain>ATCC 43067 / DSM 2661 / JAL-1 / JCM 10045 / NBRC 100440</strain>
    </source>
</reference>
<reference key="2">
    <citation type="journal article" date="1997" name="Science">
        <title>Evidence for a family of archaeal ATPases.</title>
        <authorList>
            <person name="Koonin E.V."/>
        </authorList>
    </citation>
    <scope>SIMILARITY</scope>
</reference>
<sequence length="365" mass="43328">MIMKFFDREREINEILGILDETPDNIYFIYGPINSGKTTLMMEIINRLKDDKKYRIFYYNLRGVRISSYSDFFDIMFEIREDNKFKQMVKDADVLVEGIKFIEKTAKLFNESIILPSDLAKVILSKQKGFDVFRYLERVFREMNKKGLKPVIIIDELQRLKGLKSNGELIDDLFNFFVRLTKELHITHCFCLSSDSLFIEYVYDRAELRGRADYILVDDFDKETALKFMDFLSEDILGRKLSEDEKELIYSYVGGKPKDVYDVIIKLKLGKELKDILEFMLKEEIQKLKYFLEDVKEDDEELYNKIVDALKIFKENYEIEDIKIPKNIREFLVKKNILFLNPIEGTLKPQSFLVWNAIKKLLNGH</sequence>
<accession>Q60388</accession>
<comment type="similarity">
    <text evidence="2">Belongs to the archaeal ATPase family.</text>
</comment>
<dbReference type="EMBL" id="L77117">
    <property type="protein sequence ID" value="AAB98065.1"/>
    <property type="molecule type" value="Genomic_DNA"/>
</dbReference>
<dbReference type="PIR" id="C64309">
    <property type="entry name" value="C64309"/>
</dbReference>
<dbReference type="SMR" id="Q60388"/>
<dbReference type="STRING" id="243232.MJ_0075"/>
<dbReference type="PaxDb" id="243232-MJ_0075"/>
<dbReference type="DNASU" id="1450914"/>
<dbReference type="EnsemblBacteria" id="AAB98065">
    <property type="protein sequence ID" value="AAB98065"/>
    <property type="gene ID" value="MJ_0075"/>
</dbReference>
<dbReference type="KEGG" id="mja:MJ_0075"/>
<dbReference type="eggNOG" id="arCOG03407">
    <property type="taxonomic scope" value="Archaea"/>
</dbReference>
<dbReference type="HOGENOM" id="CLU_068608_0_0_2"/>
<dbReference type="InParanoid" id="Q60388"/>
<dbReference type="PhylomeDB" id="Q60388"/>
<dbReference type="Proteomes" id="UP000000805">
    <property type="component" value="Chromosome"/>
</dbReference>
<dbReference type="GO" id="GO:0005524">
    <property type="term" value="F:ATP binding"/>
    <property type="evidence" value="ECO:0007669"/>
    <property type="project" value="UniProtKB-KW"/>
</dbReference>
<dbReference type="GO" id="GO:0016887">
    <property type="term" value="F:ATP hydrolysis activity"/>
    <property type="evidence" value="ECO:0007669"/>
    <property type="project" value="InterPro"/>
</dbReference>
<dbReference type="CDD" id="cd00009">
    <property type="entry name" value="AAA"/>
    <property type="match status" value="1"/>
</dbReference>
<dbReference type="Gene3D" id="3.40.50.300">
    <property type="entry name" value="P-loop containing nucleotide triphosphate hydrolases"/>
    <property type="match status" value="1"/>
</dbReference>
<dbReference type="Gene3D" id="1.10.10.10">
    <property type="entry name" value="Winged helix-like DNA-binding domain superfamily/Winged helix DNA-binding domain"/>
    <property type="match status" value="1"/>
</dbReference>
<dbReference type="InterPro" id="IPR003593">
    <property type="entry name" value="AAA+_ATPase"/>
</dbReference>
<dbReference type="InterPro" id="IPR011579">
    <property type="entry name" value="ATPase_dom"/>
</dbReference>
<dbReference type="InterPro" id="IPR049081">
    <property type="entry name" value="MJ1010-like_2nd"/>
</dbReference>
<dbReference type="InterPro" id="IPR027417">
    <property type="entry name" value="P-loop_NTPase"/>
</dbReference>
<dbReference type="InterPro" id="IPR036388">
    <property type="entry name" value="WH-like_DNA-bd_sf"/>
</dbReference>
<dbReference type="PANTHER" id="PTHR34301:SF8">
    <property type="entry name" value="ATPASE DOMAIN-CONTAINING PROTEIN"/>
    <property type="match status" value="1"/>
</dbReference>
<dbReference type="PANTHER" id="PTHR34301">
    <property type="entry name" value="DNA-BINDING PROTEIN-RELATED"/>
    <property type="match status" value="1"/>
</dbReference>
<dbReference type="Pfam" id="PF01637">
    <property type="entry name" value="ATPase_2"/>
    <property type="match status" value="1"/>
</dbReference>
<dbReference type="Pfam" id="PF21690">
    <property type="entry name" value="MJ1010-like_2nd"/>
    <property type="match status" value="1"/>
</dbReference>
<dbReference type="SMART" id="SM00382">
    <property type="entry name" value="AAA"/>
    <property type="match status" value="1"/>
</dbReference>
<dbReference type="SUPFAM" id="SSF52540">
    <property type="entry name" value="P-loop containing nucleoside triphosphate hydrolases"/>
    <property type="match status" value="1"/>
</dbReference>